<organism>
    <name type="scientific">Shewanella baltica (strain OS185)</name>
    <dbReference type="NCBI Taxonomy" id="402882"/>
    <lineage>
        <taxon>Bacteria</taxon>
        <taxon>Pseudomonadati</taxon>
        <taxon>Pseudomonadota</taxon>
        <taxon>Gammaproteobacteria</taxon>
        <taxon>Alteromonadales</taxon>
        <taxon>Shewanellaceae</taxon>
        <taxon>Shewanella</taxon>
    </lineage>
</organism>
<accession>P0DSN4</accession>
<name>MTRC_SHEB8</name>
<keyword id="KW-0002">3D-structure</keyword>
<keyword id="KW-0732">Signal</keyword>
<sequence>MMNAQTTKIALLLAASAVTMALTGCGGSDGNDGNPGEPGGEPAPAIQILNFTFDKSVITNGVPSVEFTVTNENDLPVVGLQKMRFAAAQLIPQGATGAGNASQWQYFGDETCDVAATCPGTFVDQKNGHYSYTFNMNLTANAKITYNDQLAQRVLIRAYNTPLPDGTQVPNSNAFVDFTADTGAAPTYSRKIVATESCNTCHQDLANVKHGGAYSDVNYCATCHTAGKVGVGKEFNVLVHAKHKDLTLGSLESCQSCHAANDAAPDWGNWSRIPTAATCGSCHSTVDFAAGKGHSQQLDNSNCIACHNSDWTAELHTGKTADKKAVIAQLGMQATLVGQTDDTAVLTVSILDKDGNAIDAATVQDKIKRLETVTNVGPNFPIMGYNKSPGSGAAKIAKDLVKDGALQAGVTLVDGKLVFTTPALPFGTGDTDTAFTFIGLEMCSTGTSLTACTVDSATTSMKAELAFGTKSGNAPSMRHVNSVNFSTCQGCHSDTFEIHKGHHSGFVMTEQVSHAKDANGKAIVGVDGCVACHTPDGTYASGANKGAFEMKLHVIHGEQGVIKECTQCHNDFNLDAFKVKGALATSAGKYTTPITATCTSCHAPESIGHGLENMGAIVNGDYVQANQAAQSETCFYCHKPTPTDHTQVKM</sequence>
<reference key="1">
    <citation type="submission" date="2007-07" db="EMBL/GenBank/DDBJ databases">
        <title>Complete sequence of chromosome of Shewanella baltica OS185.</title>
        <authorList>
            <consortium name="US DOE Joint Genome Institute"/>
            <person name="Copeland A."/>
            <person name="Lucas S."/>
            <person name="Lapidus A."/>
            <person name="Barry K."/>
            <person name="Glavina del Rio T."/>
            <person name="Dalin E."/>
            <person name="Tice H."/>
            <person name="Pitluck S."/>
            <person name="Sims D."/>
            <person name="Brettin T."/>
            <person name="Bruce D."/>
            <person name="Detter J.C."/>
            <person name="Han C."/>
            <person name="Schmutz J."/>
            <person name="Larimer F."/>
            <person name="Land M."/>
            <person name="Hauser L."/>
            <person name="Kyrpides N."/>
            <person name="Mikhailova N."/>
            <person name="Brettar I."/>
            <person name="Rodrigues J."/>
            <person name="Konstantinidis K."/>
            <person name="Tiedje J."/>
            <person name="Richardson P."/>
        </authorList>
    </citation>
    <scope>NUCLEOTIDE SEQUENCE [LARGE SCALE GENOMIC DNA]</scope>
    <source>
        <strain>OS185</strain>
    </source>
</reference>
<evidence type="ECO:0000255" key="1"/>
<evidence type="ECO:0000305" key="2"/>
<evidence type="ECO:0007829" key="3">
    <source>
        <dbReference type="PDB" id="6QYC"/>
    </source>
</evidence>
<proteinExistence type="evidence at protein level"/>
<feature type="signal peptide" evidence="1">
    <location>
        <begin position="1"/>
        <end position="21"/>
    </location>
</feature>
<feature type="chain" id="PRO_0000447316" description="Multiheme cytochrome MtrC">
    <location>
        <begin position="22"/>
        <end position="650"/>
    </location>
</feature>
<feature type="strand" evidence="3">
    <location>
        <begin position="50"/>
        <end position="59"/>
    </location>
</feature>
<feature type="strand" evidence="3">
    <location>
        <begin position="62"/>
        <end position="70"/>
    </location>
</feature>
<feature type="strand" evidence="3">
    <location>
        <begin position="82"/>
        <end position="91"/>
    </location>
</feature>
<feature type="turn" evidence="3">
    <location>
        <begin position="93"/>
        <end position="96"/>
    </location>
</feature>
<feature type="strand" evidence="3">
    <location>
        <begin position="103"/>
        <end position="113"/>
    </location>
</feature>
<feature type="strand" evidence="3">
    <location>
        <begin position="119"/>
        <end position="124"/>
    </location>
</feature>
<feature type="strand" evidence="3">
    <location>
        <begin position="126"/>
        <end position="133"/>
    </location>
</feature>
<feature type="helix" evidence="3">
    <location>
        <begin position="138"/>
        <end position="140"/>
    </location>
</feature>
<feature type="strand" evidence="3">
    <location>
        <begin position="150"/>
        <end position="158"/>
    </location>
</feature>
<feature type="strand" evidence="3">
    <location>
        <begin position="172"/>
        <end position="179"/>
    </location>
</feature>
<feature type="turn" evidence="3">
    <location>
        <begin position="180"/>
        <end position="182"/>
    </location>
</feature>
<feature type="helix" evidence="3">
    <location>
        <begin position="195"/>
        <end position="202"/>
    </location>
</feature>
<feature type="helix" evidence="3">
    <location>
        <begin position="205"/>
        <end position="207"/>
    </location>
</feature>
<feature type="helix" evidence="3">
    <location>
        <begin position="210"/>
        <end position="212"/>
    </location>
</feature>
<feature type="helix" evidence="3">
    <location>
        <begin position="217"/>
        <end position="223"/>
    </location>
</feature>
<feature type="strand" evidence="3">
    <location>
        <begin position="224"/>
        <end position="226"/>
    </location>
</feature>
<feature type="helix" evidence="3">
    <location>
        <begin position="235"/>
        <end position="243"/>
    </location>
</feature>
<feature type="helix" evidence="3">
    <location>
        <begin position="249"/>
        <end position="252"/>
    </location>
</feature>
<feature type="helix" evidence="3">
    <location>
        <begin position="254"/>
        <end position="256"/>
    </location>
</feature>
<feature type="turn" evidence="3">
    <location>
        <begin position="265"/>
        <end position="268"/>
    </location>
</feature>
<feature type="helix" evidence="3">
    <location>
        <begin position="269"/>
        <end position="272"/>
    </location>
</feature>
<feature type="helix" evidence="3">
    <location>
        <begin position="276"/>
        <end position="282"/>
    </location>
</feature>
<feature type="turn" evidence="3">
    <location>
        <begin position="288"/>
        <end position="291"/>
    </location>
</feature>
<feature type="strand" evidence="3">
    <location>
        <begin position="292"/>
        <end position="294"/>
    </location>
</feature>
<feature type="strand" evidence="3">
    <location>
        <begin position="298"/>
        <end position="300"/>
    </location>
</feature>
<feature type="helix" evidence="3">
    <location>
        <begin position="303"/>
        <end position="306"/>
    </location>
</feature>
<feature type="helix" evidence="3">
    <location>
        <begin position="309"/>
        <end position="327"/>
    </location>
</feature>
<feature type="strand" evidence="3">
    <location>
        <begin position="331"/>
        <end position="338"/>
    </location>
</feature>
<feature type="strand" evidence="3">
    <location>
        <begin position="344"/>
        <end position="351"/>
    </location>
</feature>
<feature type="helix" evidence="3">
    <location>
        <begin position="360"/>
        <end position="362"/>
    </location>
</feature>
<feature type="helix" evidence="3">
    <location>
        <begin position="364"/>
        <end position="366"/>
    </location>
</feature>
<feature type="strand" evidence="3">
    <location>
        <begin position="367"/>
        <end position="376"/>
    </location>
</feature>
<feature type="strand" evidence="3">
    <location>
        <begin position="382"/>
        <end position="386"/>
    </location>
</feature>
<feature type="turn" evidence="3">
    <location>
        <begin position="389"/>
        <end position="391"/>
    </location>
</feature>
<feature type="strand" evidence="3">
    <location>
        <begin position="396"/>
        <end position="402"/>
    </location>
</feature>
<feature type="strand" evidence="3">
    <location>
        <begin position="410"/>
        <end position="413"/>
    </location>
</feature>
<feature type="strand" evidence="3">
    <location>
        <begin position="416"/>
        <end position="420"/>
    </location>
</feature>
<feature type="helix" evidence="3">
    <location>
        <begin position="429"/>
        <end position="432"/>
    </location>
</feature>
<feature type="strand" evidence="3">
    <location>
        <begin position="433"/>
        <end position="445"/>
    </location>
</feature>
<feature type="strand" evidence="3">
    <location>
        <begin position="457"/>
        <end position="460"/>
    </location>
</feature>
<feature type="strand" evidence="3">
    <location>
        <begin position="464"/>
        <end position="471"/>
    </location>
</feature>
<feature type="strand" evidence="3">
    <location>
        <begin position="481"/>
        <end position="483"/>
    </location>
</feature>
<feature type="helix" evidence="3">
    <location>
        <begin position="486"/>
        <end position="492"/>
    </location>
</feature>
<feature type="helix" evidence="3">
    <location>
        <begin position="510"/>
        <end position="512"/>
    </location>
</feature>
<feature type="helix" evidence="3">
    <location>
        <begin position="527"/>
        <end position="531"/>
    </location>
</feature>
<feature type="turn" evidence="3">
    <location>
        <begin position="539"/>
        <end position="544"/>
    </location>
</feature>
<feature type="helix" evidence="3">
    <location>
        <begin position="548"/>
        <end position="556"/>
    </location>
</feature>
<feature type="helix" evidence="3">
    <location>
        <begin position="565"/>
        <end position="567"/>
    </location>
</feature>
<feature type="helix" evidence="3">
    <location>
        <begin position="574"/>
        <end position="579"/>
    </location>
</feature>
<feature type="strand" evidence="3">
    <location>
        <begin position="583"/>
        <end position="586"/>
    </location>
</feature>
<feature type="strand" evidence="3">
    <location>
        <begin position="589"/>
        <end position="591"/>
    </location>
</feature>
<feature type="helix" evidence="3">
    <location>
        <begin position="593"/>
        <end position="598"/>
    </location>
</feature>
<feature type="turn" evidence="3">
    <location>
        <begin position="599"/>
        <end position="601"/>
    </location>
</feature>
<feature type="helix" evidence="3">
    <location>
        <begin position="604"/>
        <end position="606"/>
    </location>
</feature>
<feature type="helix" evidence="3">
    <location>
        <begin position="612"/>
        <end position="614"/>
    </location>
</feature>
<feature type="strand" evidence="3">
    <location>
        <begin position="618"/>
        <end position="620"/>
    </location>
</feature>
<feature type="helix" evidence="3">
    <location>
        <begin position="622"/>
        <end position="627"/>
    </location>
</feature>
<feature type="turn" evidence="3">
    <location>
        <begin position="628"/>
        <end position="630"/>
    </location>
</feature>
<feature type="helix" evidence="3">
    <location>
        <begin position="634"/>
        <end position="637"/>
    </location>
</feature>
<dbReference type="EMBL" id="CP000753">
    <property type="protein sequence ID" value="ABS07725.1"/>
    <property type="molecule type" value="Genomic_DNA"/>
</dbReference>
<dbReference type="RefSeq" id="WP_012088805.1">
    <property type="nucleotide sequence ID" value="NC_009665.1"/>
</dbReference>
<dbReference type="PDB" id="6QYC">
    <property type="method" value="X-ray"/>
    <property type="resolution" value="2.29 A"/>
    <property type="chains" value="A/B/C=43-650"/>
</dbReference>
<dbReference type="PDB" id="6R2Q">
    <property type="method" value="X-ray"/>
    <property type="resolution" value="2.70 A"/>
    <property type="chains" value="C=1-650"/>
</dbReference>
<dbReference type="PDBsum" id="6QYC"/>
<dbReference type="PDBsum" id="6R2Q"/>
<dbReference type="SMR" id="P0DSN4"/>
<dbReference type="KEGG" id="sbm:Shew185_1578"/>
<dbReference type="CDD" id="cd08168">
    <property type="entry name" value="Cytochrom_C3"/>
    <property type="match status" value="1"/>
</dbReference>
<dbReference type="Gene3D" id="1.10.720.180">
    <property type="match status" value="1"/>
</dbReference>
<dbReference type="InterPro" id="IPR020014">
    <property type="entry name" value="Decahaem_cyt-c_OmcA/MtrC"/>
</dbReference>
<dbReference type="InterPro" id="IPR054334">
    <property type="entry name" value="MtrC-MtrF_dom_I"/>
</dbReference>
<dbReference type="InterPro" id="IPR054337">
    <property type="entry name" value="Mtrc-MtrF_dom_II/IV"/>
</dbReference>
<dbReference type="InterPro" id="IPR036280">
    <property type="entry name" value="Multihaem_cyt_sf"/>
</dbReference>
<dbReference type="NCBIfam" id="TIGR03507">
    <property type="entry name" value="decahem_SO1788"/>
    <property type="match status" value="1"/>
</dbReference>
<dbReference type="Pfam" id="PF22113">
    <property type="entry name" value="Mtrc-MtrF_II-IV_dom"/>
    <property type="match status" value="2"/>
</dbReference>
<dbReference type="Pfam" id="PF22111">
    <property type="entry name" value="MtrC-MtrF_N"/>
    <property type="match status" value="1"/>
</dbReference>
<dbReference type="SUPFAM" id="SSF48695">
    <property type="entry name" value="Multiheme cytochromes"/>
    <property type="match status" value="1"/>
</dbReference>
<dbReference type="PROSITE" id="PS51008">
    <property type="entry name" value="MULTIHEME_CYTC"/>
    <property type="match status" value="1"/>
</dbReference>
<gene>
    <name type="primary">mtrC</name>
    <name type="ordered locus">Shew185_1578</name>
</gene>
<protein>
    <recommendedName>
        <fullName evidence="2">Multiheme cytochrome MtrC</fullName>
    </recommendedName>
</protein>